<reference key="1">
    <citation type="journal article" date="1997" name="Nature">
        <title>The nucleotide sequence of Saccharomyces cerevisiae chromosome IV.</title>
        <authorList>
            <person name="Jacq C."/>
            <person name="Alt-Moerbe J."/>
            <person name="Andre B."/>
            <person name="Arnold W."/>
            <person name="Bahr A."/>
            <person name="Ballesta J.P.G."/>
            <person name="Bargues M."/>
            <person name="Baron L."/>
            <person name="Becker A."/>
            <person name="Biteau N."/>
            <person name="Bloecker H."/>
            <person name="Blugeon C."/>
            <person name="Boskovic J."/>
            <person name="Brandt P."/>
            <person name="Brueckner M."/>
            <person name="Buitrago M.J."/>
            <person name="Coster F."/>
            <person name="Delaveau T."/>
            <person name="del Rey F."/>
            <person name="Dujon B."/>
            <person name="Eide L.G."/>
            <person name="Garcia-Cantalejo J.M."/>
            <person name="Goffeau A."/>
            <person name="Gomez-Peris A."/>
            <person name="Granotier C."/>
            <person name="Hanemann V."/>
            <person name="Hankeln T."/>
            <person name="Hoheisel J.D."/>
            <person name="Jaeger W."/>
            <person name="Jimenez A."/>
            <person name="Jonniaux J.-L."/>
            <person name="Kraemer C."/>
            <person name="Kuester H."/>
            <person name="Laamanen P."/>
            <person name="Legros Y."/>
            <person name="Louis E.J."/>
            <person name="Moeller-Rieker S."/>
            <person name="Monnet A."/>
            <person name="Moro M."/>
            <person name="Mueller-Auer S."/>
            <person name="Nussbaumer B."/>
            <person name="Paricio N."/>
            <person name="Paulin L."/>
            <person name="Perea J."/>
            <person name="Perez-Alonso M."/>
            <person name="Perez-Ortin J.E."/>
            <person name="Pohl T.M."/>
            <person name="Prydz H."/>
            <person name="Purnelle B."/>
            <person name="Rasmussen S.W."/>
            <person name="Remacha M.A."/>
            <person name="Revuelta J.L."/>
            <person name="Rieger M."/>
            <person name="Salom D."/>
            <person name="Saluz H.P."/>
            <person name="Saiz J.E."/>
            <person name="Saren A.-M."/>
            <person name="Schaefer M."/>
            <person name="Scharfe M."/>
            <person name="Schmidt E.R."/>
            <person name="Schneider C."/>
            <person name="Scholler P."/>
            <person name="Schwarz S."/>
            <person name="Soler-Mira A."/>
            <person name="Urrestarazu L.A."/>
            <person name="Verhasselt P."/>
            <person name="Vissers S."/>
            <person name="Voet M."/>
            <person name="Volckaert G."/>
            <person name="Wagner G."/>
            <person name="Wambutt R."/>
            <person name="Wedler E."/>
            <person name="Wedler H."/>
            <person name="Woelfl S."/>
            <person name="Harris D.E."/>
            <person name="Bowman S."/>
            <person name="Brown D."/>
            <person name="Churcher C.M."/>
            <person name="Connor R."/>
            <person name="Dedman K."/>
            <person name="Gentles S."/>
            <person name="Hamlin N."/>
            <person name="Hunt S."/>
            <person name="Jones L."/>
            <person name="McDonald S."/>
            <person name="Murphy L.D."/>
            <person name="Niblett D."/>
            <person name="Odell C."/>
            <person name="Oliver K."/>
            <person name="Rajandream M.A."/>
            <person name="Richards C."/>
            <person name="Shore L."/>
            <person name="Walsh S.V."/>
            <person name="Barrell B.G."/>
            <person name="Dietrich F.S."/>
            <person name="Mulligan J.T."/>
            <person name="Allen E."/>
            <person name="Araujo R."/>
            <person name="Aviles E."/>
            <person name="Berno A."/>
            <person name="Carpenter J."/>
            <person name="Chen E."/>
            <person name="Cherry J.M."/>
            <person name="Chung E."/>
            <person name="Duncan M."/>
            <person name="Hunicke-Smith S."/>
            <person name="Hyman R.W."/>
            <person name="Komp C."/>
            <person name="Lashkari D."/>
            <person name="Lew H."/>
            <person name="Lin D."/>
            <person name="Mosedale D."/>
            <person name="Nakahara K."/>
            <person name="Namath A."/>
            <person name="Oefner P."/>
            <person name="Oh C."/>
            <person name="Petel F.X."/>
            <person name="Roberts D."/>
            <person name="Schramm S."/>
            <person name="Schroeder M."/>
            <person name="Shogren T."/>
            <person name="Shroff N."/>
            <person name="Winant A."/>
            <person name="Yelton M.A."/>
            <person name="Botstein D."/>
            <person name="Davis R.W."/>
            <person name="Johnston M."/>
            <person name="Andrews S."/>
            <person name="Brinkman R."/>
            <person name="Cooper J."/>
            <person name="Ding H."/>
            <person name="Du Z."/>
            <person name="Favello A."/>
            <person name="Fulton L."/>
            <person name="Gattung S."/>
            <person name="Greco T."/>
            <person name="Hallsworth K."/>
            <person name="Hawkins J."/>
            <person name="Hillier L.W."/>
            <person name="Jier M."/>
            <person name="Johnson D."/>
            <person name="Johnston L."/>
            <person name="Kirsten J."/>
            <person name="Kucaba T."/>
            <person name="Langston Y."/>
            <person name="Latreille P."/>
            <person name="Le T."/>
            <person name="Mardis E."/>
            <person name="Menezes S."/>
            <person name="Miller N."/>
            <person name="Nhan M."/>
            <person name="Pauley A."/>
            <person name="Peluso D."/>
            <person name="Rifkin L."/>
            <person name="Riles L."/>
            <person name="Taich A."/>
            <person name="Trevaskis E."/>
            <person name="Vignati D."/>
            <person name="Wilcox L."/>
            <person name="Wohldman P."/>
            <person name="Vaudin M."/>
            <person name="Wilson R."/>
            <person name="Waterston R."/>
            <person name="Albermann K."/>
            <person name="Hani J."/>
            <person name="Heumann K."/>
            <person name="Kleine K."/>
            <person name="Mewes H.-W."/>
            <person name="Zollner A."/>
            <person name="Zaccaria P."/>
        </authorList>
    </citation>
    <scope>NUCLEOTIDE SEQUENCE [LARGE SCALE GENOMIC DNA]</scope>
    <source>
        <strain>ATCC 204508 / S288c</strain>
    </source>
</reference>
<reference key="2">
    <citation type="journal article" date="2014" name="G3 (Bethesda)">
        <title>The reference genome sequence of Saccharomyces cerevisiae: Then and now.</title>
        <authorList>
            <person name="Engel S.R."/>
            <person name="Dietrich F.S."/>
            <person name="Fisk D.G."/>
            <person name="Binkley G."/>
            <person name="Balakrishnan R."/>
            <person name="Costanzo M.C."/>
            <person name="Dwight S.S."/>
            <person name="Hitz B.C."/>
            <person name="Karra K."/>
            <person name="Nash R.S."/>
            <person name="Weng S."/>
            <person name="Wong E.D."/>
            <person name="Lloyd P."/>
            <person name="Skrzypek M.S."/>
            <person name="Miyasato S.R."/>
            <person name="Simison M."/>
            <person name="Cherry J.M."/>
        </authorList>
    </citation>
    <scope>GENOME REANNOTATION</scope>
    <source>
        <strain>ATCC 204508 / S288c</strain>
    </source>
</reference>
<name>YD340_YEAST</name>
<protein>
    <recommendedName>
        <fullName>Putative uncharacterized protein YDR340W</fullName>
    </recommendedName>
</protein>
<organism>
    <name type="scientific">Saccharomyces cerevisiae (strain ATCC 204508 / S288c)</name>
    <name type="common">Baker's yeast</name>
    <dbReference type="NCBI Taxonomy" id="559292"/>
    <lineage>
        <taxon>Eukaryota</taxon>
        <taxon>Fungi</taxon>
        <taxon>Dikarya</taxon>
        <taxon>Ascomycota</taxon>
        <taxon>Saccharomycotina</taxon>
        <taxon>Saccharomycetes</taxon>
        <taxon>Saccharomycetales</taxon>
        <taxon>Saccharomycetaceae</taxon>
        <taxon>Saccharomyces</taxon>
    </lineage>
</organism>
<sequence>MPNCFSEEIAGIALTTRPLGLKHFEVKVFLVFYIITMVKIYIFLIRNKIMERSVGIKIHYRLSTNSYSINILSYTVLDYDISYEKLSSKLGEAEVQGLIM</sequence>
<evidence type="ECO:0000255" key="1"/>
<evidence type="ECO:0000305" key="2"/>
<evidence type="ECO:0000305" key="3">
    <source>
    </source>
</evidence>
<feature type="chain" id="PRO_0000299884" description="Putative uncharacterized protein YDR340W">
    <location>
        <begin position="1"/>
        <end position="100"/>
    </location>
</feature>
<feature type="transmembrane region" description="Helical" evidence="1">
    <location>
        <begin position="28"/>
        <end position="45"/>
    </location>
</feature>
<proteinExistence type="uncertain"/>
<gene>
    <name type="ordered locus">YDR340W</name>
</gene>
<accession>Q05503</accession>
<dbReference type="EMBL" id="U51032">
    <property type="protein sequence ID" value="AAB64776.1"/>
    <property type="molecule type" value="Genomic_DNA"/>
</dbReference>
<dbReference type="PIR" id="S70105">
    <property type="entry name" value="S70105"/>
</dbReference>
<dbReference type="SMR" id="Q05503"/>
<dbReference type="DIP" id="DIP-5469N"/>
<dbReference type="PaxDb" id="4932-YDR340W"/>
<dbReference type="EnsemblFungi" id="YDR340W_mRNA">
    <property type="protein sequence ID" value="YDR340W"/>
    <property type="gene ID" value="YDR340W"/>
</dbReference>
<dbReference type="AGR" id="SGD:S000002748"/>
<dbReference type="SGD" id="S000002748">
    <property type="gene designation" value="YDR340W"/>
</dbReference>
<dbReference type="GeneTree" id="ENSGT00940000180892"/>
<dbReference type="HOGENOM" id="CLU_2308276_0_0_1"/>
<dbReference type="GO" id="GO:0016020">
    <property type="term" value="C:membrane"/>
    <property type="evidence" value="ECO:0007669"/>
    <property type="project" value="UniProtKB-SubCell"/>
</dbReference>
<comment type="subcellular location">
    <subcellularLocation>
        <location evidence="2">Membrane</location>
        <topology evidence="2">Single-pass membrane protein</topology>
    </subcellularLocation>
</comment>
<comment type="caution">
    <text evidence="3">Product of a dubious gene prediction unlikely to encode a functional protein. Because of that it is not part of the S.cerevisiae S288c complete/reference proteome set.</text>
</comment>
<keyword id="KW-0472">Membrane</keyword>
<keyword id="KW-0812">Transmembrane</keyword>
<keyword id="KW-1133">Transmembrane helix</keyword>